<dbReference type="EMBL" id="AAFW02000067">
    <property type="protein sequence ID" value="EDN62726.1"/>
    <property type="molecule type" value="Genomic_DNA"/>
</dbReference>
<dbReference type="SMR" id="A6ZRZ4"/>
<dbReference type="HOGENOM" id="CLU_178727_0_0_1"/>
<dbReference type="Proteomes" id="UP000007060">
    <property type="component" value="Unassembled WGS sequence"/>
</dbReference>
<dbReference type="GO" id="GO:0005768">
    <property type="term" value="C:endosome"/>
    <property type="evidence" value="ECO:0007669"/>
    <property type="project" value="UniProtKB-SubCell"/>
</dbReference>
<name>SNAPN_YEAS7</name>
<gene>
    <name type="primary">SNN1</name>
    <name type="ORF">SCY_4705</name>
</gene>
<accession>A6ZRZ4</accession>
<evidence type="ECO:0000250" key="1"/>
<evidence type="ECO:0000255" key="2"/>
<evidence type="ECO:0000305" key="3"/>
<reference key="1">
    <citation type="journal article" date="2007" name="Proc. Natl. Acad. Sci. U.S.A.">
        <title>Genome sequencing and comparative analysis of Saccharomyces cerevisiae strain YJM789.</title>
        <authorList>
            <person name="Wei W."/>
            <person name="McCusker J.H."/>
            <person name="Hyman R.W."/>
            <person name="Jones T."/>
            <person name="Ning Y."/>
            <person name="Cao Z."/>
            <person name="Gu Z."/>
            <person name="Bruno D."/>
            <person name="Miranda M."/>
            <person name="Nguyen M."/>
            <person name="Wilhelmy J."/>
            <person name="Komp C."/>
            <person name="Tamse R."/>
            <person name="Wang X."/>
            <person name="Jia P."/>
            <person name="Luedi P."/>
            <person name="Oefner P.J."/>
            <person name="David L."/>
            <person name="Dietrich F.S."/>
            <person name="Li Y."/>
            <person name="Davis R.W."/>
            <person name="Steinmetz L.M."/>
        </authorList>
    </citation>
    <scope>NUCLEOTIDE SEQUENCE [LARGE SCALE GENOMIC DNA]</scope>
    <source>
        <strain>YJM789</strain>
    </source>
</reference>
<keyword id="KW-0175">Coiled coil</keyword>
<keyword id="KW-0967">Endosome</keyword>
<keyword id="KW-0813">Transport</keyword>
<comment type="function">
    <text evidence="1">Component of the biogenesis of lysosome-related organelles complex-1 (BLOC-1), a complex involved in endosomal cargo sorting.</text>
</comment>
<comment type="subunit">
    <text evidence="1">Component of the biogenesis of lysosome-related organelles complex-1 (BLOC-1) composed of at least BLI1, BLS1, CNL1, KXD1, SNN1 and VAB2.</text>
</comment>
<comment type="subcellular location">
    <subcellularLocation>
        <location evidence="1">Endosome</location>
    </subcellularLocation>
</comment>
<comment type="similarity">
    <text evidence="3">Belongs to the SNAPIN family.</text>
</comment>
<feature type="chain" id="PRO_0000410663" description="Biogenesis of lysosome-related organelles complex 1 subunit SNN1">
    <location>
        <begin position="1"/>
        <end position="102"/>
    </location>
</feature>
<feature type="coiled-coil region" evidence="2">
    <location>
        <begin position="71"/>
        <end position="102"/>
    </location>
</feature>
<proteinExistence type="inferred from homology"/>
<protein>
    <recommendedName>
        <fullName>Biogenesis of lysosome-related organelles complex 1 subunit SNN1</fullName>
        <shortName>BLOC-1 subunit SNN1</shortName>
    </recommendedName>
    <alternativeName>
        <fullName>SNAPIN-like protein 1</fullName>
    </alternativeName>
</protein>
<sequence>MAGDSISADGTGVHPVELSVYSVLSTDLDGLYQSINELRESQALLILMLRKVRDKLRREGQVLYDPEPFKPTMDKLADLSARVRILSQRYEELQGNARALNN</sequence>
<organism>
    <name type="scientific">Saccharomyces cerevisiae (strain YJM789)</name>
    <name type="common">Baker's yeast</name>
    <dbReference type="NCBI Taxonomy" id="307796"/>
    <lineage>
        <taxon>Eukaryota</taxon>
        <taxon>Fungi</taxon>
        <taxon>Dikarya</taxon>
        <taxon>Ascomycota</taxon>
        <taxon>Saccharomycotina</taxon>
        <taxon>Saccharomycetes</taxon>
        <taxon>Saccharomycetales</taxon>
        <taxon>Saccharomycetaceae</taxon>
        <taxon>Saccharomyces</taxon>
    </lineage>
</organism>